<evidence type="ECO:0000250" key="1"/>
<evidence type="ECO:0000255" key="2"/>
<evidence type="ECO:0000305" key="3"/>
<protein>
    <recommendedName>
        <fullName>Cytochrome P450 71A9</fullName>
        <ecNumber>1.14.-.-</ecNumber>
    </recommendedName>
    <alternativeName>
        <fullName>Cytochrome P450 CP1</fullName>
    </alternativeName>
</protein>
<gene>
    <name type="primary">CYP71A9</name>
</gene>
<keyword id="KW-0349">Heme</keyword>
<keyword id="KW-0408">Iron</keyword>
<keyword id="KW-0472">Membrane</keyword>
<keyword id="KW-0479">Metal-binding</keyword>
<keyword id="KW-0503">Monooxygenase</keyword>
<keyword id="KW-0560">Oxidoreductase</keyword>
<keyword id="KW-1185">Reference proteome</keyword>
<keyword id="KW-0812">Transmembrane</keyword>
<keyword id="KW-1133">Transmembrane helix</keyword>
<proteinExistence type="evidence at transcript level"/>
<name>C71A9_SOYBN</name>
<comment type="cofactor">
    <cofactor evidence="1">
        <name>heme</name>
        <dbReference type="ChEBI" id="CHEBI:30413"/>
    </cofactor>
</comment>
<comment type="subcellular location">
    <subcellularLocation>
        <location evidence="3">Membrane</location>
        <topology evidence="3">Single-pass membrane protein</topology>
    </subcellularLocation>
</comment>
<comment type="induction">
    <text>By fungal elicitor.</text>
</comment>
<comment type="similarity">
    <text evidence="3">Belongs to the cytochrome P450 family.</text>
</comment>
<accession>O81970</accession>
<dbReference type="EC" id="1.14.-.-"/>
<dbReference type="EMBL" id="Y10489">
    <property type="protein sequence ID" value="CAA71513.1"/>
    <property type="molecule type" value="mRNA"/>
</dbReference>
<dbReference type="PIR" id="T07113">
    <property type="entry name" value="T07113"/>
</dbReference>
<dbReference type="RefSeq" id="NP_001239692.1">
    <property type="nucleotide sequence ID" value="NM_001252763.2"/>
</dbReference>
<dbReference type="SMR" id="O81970"/>
<dbReference type="FunCoup" id="O81970">
    <property type="interactions" value="1640"/>
</dbReference>
<dbReference type="STRING" id="3847.O81970"/>
<dbReference type="PaxDb" id="3847-GLYMA05G02760.1"/>
<dbReference type="EnsemblPlants" id="KRH57161">
    <property type="protein sequence ID" value="KRH57161"/>
    <property type="gene ID" value="GLYMA_05G042800"/>
</dbReference>
<dbReference type="GeneID" id="100806157"/>
<dbReference type="Gramene" id="KRH57161">
    <property type="protein sequence ID" value="KRH57161"/>
    <property type="gene ID" value="GLYMA_05G042800"/>
</dbReference>
<dbReference type="KEGG" id="gmx:100806157"/>
<dbReference type="eggNOG" id="KOG0156">
    <property type="taxonomic scope" value="Eukaryota"/>
</dbReference>
<dbReference type="HOGENOM" id="CLU_001570_4_2_1"/>
<dbReference type="InParanoid" id="O81970"/>
<dbReference type="OMA" id="FHDNFRI"/>
<dbReference type="OrthoDB" id="2789670at2759"/>
<dbReference type="Proteomes" id="UP000008827">
    <property type="component" value="Chromosome 5"/>
</dbReference>
<dbReference type="GO" id="GO:0016020">
    <property type="term" value="C:membrane"/>
    <property type="evidence" value="ECO:0007669"/>
    <property type="project" value="UniProtKB-SubCell"/>
</dbReference>
<dbReference type="GO" id="GO:0020037">
    <property type="term" value="F:heme binding"/>
    <property type="evidence" value="ECO:0007669"/>
    <property type="project" value="InterPro"/>
</dbReference>
<dbReference type="GO" id="GO:0005506">
    <property type="term" value="F:iron ion binding"/>
    <property type="evidence" value="ECO:0007669"/>
    <property type="project" value="InterPro"/>
</dbReference>
<dbReference type="GO" id="GO:0004497">
    <property type="term" value="F:monooxygenase activity"/>
    <property type="evidence" value="ECO:0007669"/>
    <property type="project" value="UniProtKB-KW"/>
</dbReference>
<dbReference type="GO" id="GO:0016705">
    <property type="term" value="F:oxidoreductase activity, acting on paired donors, with incorporation or reduction of molecular oxygen"/>
    <property type="evidence" value="ECO:0007669"/>
    <property type="project" value="InterPro"/>
</dbReference>
<dbReference type="CDD" id="cd11072">
    <property type="entry name" value="CYP71-like"/>
    <property type="match status" value="1"/>
</dbReference>
<dbReference type="FunFam" id="1.10.630.10:FF:000043">
    <property type="entry name" value="Cytochrome P450 99A2"/>
    <property type="match status" value="1"/>
</dbReference>
<dbReference type="Gene3D" id="1.10.630.10">
    <property type="entry name" value="Cytochrome P450"/>
    <property type="match status" value="1"/>
</dbReference>
<dbReference type="InterPro" id="IPR001128">
    <property type="entry name" value="Cyt_P450"/>
</dbReference>
<dbReference type="InterPro" id="IPR017972">
    <property type="entry name" value="Cyt_P450_CS"/>
</dbReference>
<dbReference type="InterPro" id="IPR002401">
    <property type="entry name" value="Cyt_P450_E_grp-I"/>
</dbReference>
<dbReference type="InterPro" id="IPR036396">
    <property type="entry name" value="Cyt_P450_sf"/>
</dbReference>
<dbReference type="PANTHER" id="PTHR47955:SF19">
    <property type="entry name" value="CYTOCHROME P450 71A9-LIKE ISOFORM X1"/>
    <property type="match status" value="1"/>
</dbReference>
<dbReference type="PANTHER" id="PTHR47955">
    <property type="entry name" value="CYTOCHROME P450 FAMILY 71 PROTEIN"/>
    <property type="match status" value="1"/>
</dbReference>
<dbReference type="Pfam" id="PF00067">
    <property type="entry name" value="p450"/>
    <property type="match status" value="1"/>
</dbReference>
<dbReference type="PRINTS" id="PR00463">
    <property type="entry name" value="EP450I"/>
</dbReference>
<dbReference type="PRINTS" id="PR00385">
    <property type="entry name" value="P450"/>
</dbReference>
<dbReference type="SUPFAM" id="SSF48264">
    <property type="entry name" value="Cytochrome P450"/>
    <property type="match status" value="1"/>
</dbReference>
<dbReference type="PROSITE" id="PS00086">
    <property type="entry name" value="CYTOCHROME_P450"/>
    <property type="match status" value="1"/>
</dbReference>
<reference key="1">
    <citation type="journal article" date="1998" name="Mol. Gen. Genet.">
        <title>Identification of elicitor-induced cytochrome P450s of soybean (Glycine max L.) using differential display of mRNA.</title>
        <authorList>
            <person name="Schopfer C.R."/>
            <person name="Ebel J."/>
        </authorList>
    </citation>
    <scope>NUCLEOTIDE SEQUENCE [MRNA]</scope>
    <source>
        <strain>cv. Harosoy 63</strain>
    </source>
</reference>
<organism>
    <name type="scientific">Glycine max</name>
    <name type="common">Soybean</name>
    <name type="synonym">Glycine hispida</name>
    <dbReference type="NCBI Taxonomy" id="3847"/>
    <lineage>
        <taxon>Eukaryota</taxon>
        <taxon>Viridiplantae</taxon>
        <taxon>Streptophyta</taxon>
        <taxon>Embryophyta</taxon>
        <taxon>Tracheophyta</taxon>
        <taxon>Spermatophyta</taxon>
        <taxon>Magnoliopsida</taxon>
        <taxon>eudicotyledons</taxon>
        <taxon>Gunneridae</taxon>
        <taxon>Pentapetalae</taxon>
        <taxon>rosids</taxon>
        <taxon>fabids</taxon>
        <taxon>Fabales</taxon>
        <taxon>Fabaceae</taxon>
        <taxon>Papilionoideae</taxon>
        <taxon>50 kb inversion clade</taxon>
        <taxon>NPAAA clade</taxon>
        <taxon>indigoferoid/millettioid clade</taxon>
        <taxon>Phaseoleae</taxon>
        <taxon>Glycine</taxon>
        <taxon>Glycine subgen. Soja</taxon>
    </lineage>
</organism>
<sequence length="499" mass="56396">MISFTVFVFLTLLFTLSLVKQLRKPTAEKRRLLPPGPRKLPFIGNLHQLGTLPHQSLQYLSNKHGPLMFLQLGSIPTLVVSSAEMAREIFKNHDSVFSGRPSLYAANRLGYGSTVSFAPYGEYWREMRKIMILELLSPKRVQSFEAVRFEEVKLLLQTIALSHGPVNLSELTLSLTNNIVCRIALGKRNRSGADDANKVSEMLKETQAMLGGFFPVDFFPRLGWLNKFSGLENRLEKIFREMDNFYDQVIKEHIADNSSERSGAEHEDVVDVLLRVQKDPNQAIAITDDQIKGVLVDIFVAGTDTASATIIWIMSELIRNPKAMKRAQEEVRDLVTGKEMVEEIDLSKLLYIKSVVKEVLRLHPPAPLLVPREITENCTIKGFEIPAKTRVLVNAKSIAMDPCCWENPNEFLPERFLVSPIDFKGQHFEMLPFGVGRRGCPGVNFAMPVVELALANLLFRFDWELPLGLGIQDLDMEEAIGITIHKKAHLWLKATPFCE</sequence>
<feature type="chain" id="PRO_0000052062" description="Cytochrome P450 71A9">
    <location>
        <begin position="1"/>
        <end position="499"/>
    </location>
</feature>
<feature type="transmembrane region" description="Helical" evidence="2">
    <location>
        <begin position="2"/>
        <end position="22"/>
    </location>
</feature>
<feature type="binding site" description="axial binding residue" evidence="1">
    <location>
        <position position="440"/>
    </location>
    <ligand>
        <name>heme</name>
        <dbReference type="ChEBI" id="CHEBI:30413"/>
    </ligand>
    <ligandPart>
        <name>Fe</name>
        <dbReference type="ChEBI" id="CHEBI:18248"/>
    </ligandPart>
</feature>